<name>PSD_CHLTA</name>
<proteinExistence type="inferred from homology"/>
<organism>
    <name type="scientific">Chlamydia trachomatis serovar A (strain ATCC VR-571B / DSM 19440 / HAR-13)</name>
    <dbReference type="NCBI Taxonomy" id="315277"/>
    <lineage>
        <taxon>Bacteria</taxon>
        <taxon>Pseudomonadati</taxon>
        <taxon>Chlamydiota</taxon>
        <taxon>Chlamydiia</taxon>
        <taxon>Chlamydiales</taxon>
        <taxon>Chlamydiaceae</taxon>
        <taxon>Chlamydia/Chlamydophila group</taxon>
        <taxon>Chlamydia</taxon>
    </lineage>
</organism>
<sequence>MAAREMLYVNRETGKVEQERIICSSLVKFFIETRIGRALYSVLCKNSLFSRIVGWCQRLRVTRYFIKPFVTKYRICIEESASPLHDYASFNDFFVRKLKPDARPICQGEDICVTPADGAYLVFPSMADLSLFTIKNKPFSLESFLGDPQLAHQYAQGSMAIARLAPFDYHRFHFPIAGIAEAPRRINGHLFSIHPLMLKRNFEVFTENKREITIITSKEFGEVAYVEVGALNVGSIHQTFSPGSYVKKGAEKGFFAFGGSTVVLLFQPQRIIFDADLVGYSAQGLETRCRMGQSLGKRFSS</sequence>
<gene>
    <name evidence="1" type="primary">psd</name>
    <name type="ordered locus">CTA_0760</name>
</gene>
<reference key="1">
    <citation type="journal article" date="2005" name="Infect. Immun.">
        <title>Comparative genomic analysis of Chlamydia trachomatis oculotropic and genitotropic strains.</title>
        <authorList>
            <person name="Carlson J.H."/>
            <person name="Porcella S.F."/>
            <person name="McClarty G."/>
            <person name="Caldwell H.D."/>
        </authorList>
    </citation>
    <scope>NUCLEOTIDE SEQUENCE [LARGE SCALE GENOMIC DNA]</scope>
    <source>
        <strain>ATCC VR-571B / DSM 19440 / HAR-13</strain>
    </source>
</reference>
<dbReference type="EC" id="4.1.1.65" evidence="1"/>
<dbReference type="EMBL" id="CP000051">
    <property type="protein sequence ID" value="AAX50977.1"/>
    <property type="molecule type" value="Genomic_DNA"/>
</dbReference>
<dbReference type="RefSeq" id="WP_009873305.1">
    <property type="nucleotide sequence ID" value="NC_007429.1"/>
</dbReference>
<dbReference type="SMR" id="Q3KKZ5"/>
<dbReference type="KEGG" id="cta:CTA_0760"/>
<dbReference type="HOGENOM" id="CLU_029061_2_2_0"/>
<dbReference type="UniPathway" id="UPA00558">
    <property type="reaction ID" value="UER00616"/>
</dbReference>
<dbReference type="Proteomes" id="UP000002532">
    <property type="component" value="Chromosome"/>
</dbReference>
<dbReference type="GO" id="GO:0005886">
    <property type="term" value="C:plasma membrane"/>
    <property type="evidence" value="ECO:0007669"/>
    <property type="project" value="UniProtKB-SubCell"/>
</dbReference>
<dbReference type="GO" id="GO:0004609">
    <property type="term" value="F:phosphatidylserine decarboxylase activity"/>
    <property type="evidence" value="ECO:0007669"/>
    <property type="project" value="UniProtKB-UniRule"/>
</dbReference>
<dbReference type="GO" id="GO:0006646">
    <property type="term" value="P:phosphatidylethanolamine biosynthetic process"/>
    <property type="evidence" value="ECO:0007669"/>
    <property type="project" value="UniProtKB-UniRule"/>
</dbReference>
<dbReference type="HAMAP" id="MF_00663">
    <property type="entry name" value="PS_decarb_PSD_B_type2"/>
    <property type="match status" value="1"/>
</dbReference>
<dbReference type="InterPro" id="IPR003817">
    <property type="entry name" value="PS_Dcarbxylase"/>
</dbReference>
<dbReference type="InterPro" id="IPR033177">
    <property type="entry name" value="PSD-B"/>
</dbReference>
<dbReference type="InterPro" id="IPR033179">
    <property type="entry name" value="PSD_type2_pro"/>
</dbReference>
<dbReference type="NCBIfam" id="NF001941">
    <property type="entry name" value="PRK00723.1"/>
    <property type="match status" value="1"/>
</dbReference>
<dbReference type="NCBIfam" id="TIGR00163">
    <property type="entry name" value="PS_decarb"/>
    <property type="match status" value="1"/>
</dbReference>
<dbReference type="PANTHER" id="PTHR10067">
    <property type="entry name" value="PHOSPHATIDYLSERINE DECARBOXYLASE"/>
    <property type="match status" value="1"/>
</dbReference>
<dbReference type="PANTHER" id="PTHR10067:SF17">
    <property type="entry name" value="PHOSPHATIDYLSERINE DECARBOXYLASE PROENZYME 2"/>
    <property type="match status" value="1"/>
</dbReference>
<dbReference type="Pfam" id="PF02666">
    <property type="entry name" value="PS_Dcarbxylase"/>
    <property type="match status" value="1"/>
</dbReference>
<accession>Q3KKZ5</accession>
<comment type="function">
    <text evidence="1">Catalyzes the formation of phosphatidylethanolamine (PtdEtn) from phosphatidylserine (PtdSer).</text>
</comment>
<comment type="catalytic activity">
    <reaction evidence="1">
        <text>a 1,2-diacyl-sn-glycero-3-phospho-L-serine + H(+) = a 1,2-diacyl-sn-glycero-3-phosphoethanolamine + CO2</text>
        <dbReference type="Rhea" id="RHEA:20828"/>
        <dbReference type="ChEBI" id="CHEBI:15378"/>
        <dbReference type="ChEBI" id="CHEBI:16526"/>
        <dbReference type="ChEBI" id="CHEBI:57262"/>
        <dbReference type="ChEBI" id="CHEBI:64612"/>
        <dbReference type="EC" id="4.1.1.65"/>
    </reaction>
</comment>
<comment type="cofactor">
    <cofactor evidence="1">
        <name>pyruvate</name>
        <dbReference type="ChEBI" id="CHEBI:15361"/>
    </cofactor>
    <text evidence="1">Binds 1 pyruvoyl group covalently per subunit.</text>
</comment>
<comment type="pathway">
    <text evidence="1">Phospholipid metabolism; phosphatidylethanolamine biosynthesis; phosphatidylethanolamine from CDP-diacylglycerol: step 2/2.</text>
</comment>
<comment type="subunit">
    <text evidence="1">Heterodimer of a large membrane-associated beta subunit and a small pyruvoyl-containing alpha subunit.</text>
</comment>
<comment type="subcellular location">
    <subcellularLocation>
        <location evidence="1">Cell membrane</location>
        <topology evidence="1">Peripheral membrane protein</topology>
    </subcellularLocation>
</comment>
<comment type="PTM">
    <text evidence="1">Is synthesized initially as an inactive proenzyme. Formation of the active enzyme involves a self-maturation process in which the active site pyruvoyl group is generated from an internal serine residue via an autocatalytic post-translational modification. Two non-identical subunits are generated from the proenzyme in this reaction, and the pyruvate is formed at the N-terminus of the alpha chain, which is derived from the carboxyl end of the proenzyme. The autoendoproteolytic cleavage occurs by a canonical serine protease mechanism, in which the side chain hydroxyl group of the serine supplies its oxygen atom to form the C-terminus of the beta chain, while the remainder of the serine residue undergoes an oxidative deamination to produce ammonia and the pyruvoyl prosthetic group on the alpha chain. During this reaction, the Ser that is part of the protease active site of the proenzyme becomes the pyruvoyl prosthetic group, which constitutes an essential element of the active site of the mature decarboxylase.</text>
</comment>
<comment type="similarity">
    <text evidence="1">Belongs to the phosphatidylserine decarboxylase family. PSD-B subfamily. Prokaryotic type II sub-subfamily.</text>
</comment>
<evidence type="ECO:0000255" key="1">
    <source>
        <dbReference type="HAMAP-Rule" id="MF_00663"/>
    </source>
</evidence>
<protein>
    <recommendedName>
        <fullName evidence="1">Phosphatidylserine decarboxylase proenzyme</fullName>
        <ecNumber evidence="1">4.1.1.65</ecNumber>
    </recommendedName>
    <component>
        <recommendedName>
            <fullName evidence="1">Phosphatidylserine decarboxylase alpha chain</fullName>
        </recommendedName>
    </component>
    <component>
        <recommendedName>
            <fullName evidence="1">Phosphatidylserine decarboxylase beta chain</fullName>
        </recommendedName>
    </component>
</protein>
<keyword id="KW-1003">Cell membrane</keyword>
<keyword id="KW-0210">Decarboxylase</keyword>
<keyword id="KW-0444">Lipid biosynthesis</keyword>
<keyword id="KW-0443">Lipid metabolism</keyword>
<keyword id="KW-0456">Lyase</keyword>
<keyword id="KW-0472">Membrane</keyword>
<keyword id="KW-0594">Phospholipid biosynthesis</keyword>
<keyword id="KW-1208">Phospholipid metabolism</keyword>
<keyword id="KW-0670">Pyruvate</keyword>
<keyword id="KW-0865">Zymogen</keyword>
<feature type="chain" id="PRO_1000026606" description="Phosphatidylserine decarboxylase beta chain" evidence="1">
    <location>
        <begin position="1"/>
        <end position="259"/>
    </location>
</feature>
<feature type="chain" id="PRO_1000026607" description="Phosphatidylserine decarboxylase alpha chain" evidence="1">
    <location>
        <begin position="260"/>
        <end position="301"/>
    </location>
</feature>
<feature type="active site" description="Charge relay system; for autoendoproteolytic cleavage activity" evidence="1">
    <location>
        <position position="117"/>
    </location>
</feature>
<feature type="active site" description="Charge relay system; for autoendoproteolytic cleavage activity" evidence="1">
    <location>
        <position position="173"/>
    </location>
</feature>
<feature type="active site" description="Charge relay system; for autoendoproteolytic cleavage activity" evidence="1">
    <location>
        <position position="260"/>
    </location>
</feature>
<feature type="active site" description="Schiff-base intermediate with substrate; via pyruvic acid; for decarboxylase activity" evidence="1">
    <location>
        <position position="260"/>
    </location>
</feature>
<feature type="site" description="Cleavage (non-hydrolytic); by autocatalysis" evidence="1">
    <location>
        <begin position="259"/>
        <end position="260"/>
    </location>
</feature>
<feature type="modified residue" description="Pyruvic acid (Ser); by autocatalysis" evidence="1">
    <location>
        <position position="260"/>
    </location>
</feature>